<comment type="catalytic activity">
    <reaction evidence="1">
        <text>urea + 2 H2O + H(+) = hydrogencarbonate + 2 NH4(+)</text>
        <dbReference type="Rhea" id="RHEA:20557"/>
        <dbReference type="ChEBI" id="CHEBI:15377"/>
        <dbReference type="ChEBI" id="CHEBI:15378"/>
        <dbReference type="ChEBI" id="CHEBI:16199"/>
        <dbReference type="ChEBI" id="CHEBI:17544"/>
        <dbReference type="ChEBI" id="CHEBI:28938"/>
        <dbReference type="EC" id="3.5.1.5"/>
    </reaction>
</comment>
<comment type="pathway">
    <text evidence="1">Nitrogen metabolism; urea degradation; CO(2) and NH(3) from urea (urease route): step 1/1.</text>
</comment>
<comment type="subunit">
    <text evidence="1">Heterotrimer of UreA (gamma), UreB (beta) and UreC (alpha) subunits. Three heterotrimers associate to form the active enzyme.</text>
</comment>
<comment type="subcellular location">
    <subcellularLocation>
        <location evidence="1">Cytoplasm</location>
    </subcellularLocation>
</comment>
<comment type="similarity">
    <text evidence="1">Belongs to the urease beta subunit family.</text>
</comment>
<evidence type="ECO:0000255" key="1">
    <source>
        <dbReference type="HAMAP-Rule" id="MF_01954"/>
    </source>
</evidence>
<sequence>MIPGELFIQDGEIELNAERETATLSVANAGDRPIQVGSHYHFFETNPALQFDRAKARGMRLDIAAGTAVRFEPGQSREVQLVALAGKREVYGFRGEVMGKLDKA</sequence>
<proteinExistence type="inferred from homology"/>
<keyword id="KW-0963">Cytoplasm</keyword>
<keyword id="KW-0378">Hydrolase</keyword>
<organism>
    <name type="scientific">Rhodopseudomonas palustris (strain BisB18)</name>
    <dbReference type="NCBI Taxonomy" id="316056"/>
    <lineage>
        <taxon>Bacteria</taxon>
        <taxon>Pseudomonadati</taxon>
        <taxon>Pseudomonadota</taxon>
        <taxon>Alphaproteobacteria</taxon>
        <taxon>Hyphomicrobiales</taxon>
        <taxon>Nitrobacteraceae</taxon>
        <taxon>Rhodopseudomonas</taxon>
    </lineage>
</organism>
<protein>
    <recommendedName>
        <fullName evidence="1">Urease subunit beta</fullName>
        <ecNumber evidence="1">3.5.1.5</ecNumber>
    </recommendedName>
    <alternativeName>
        <fullName evidence="1">Urea amidohydrolase subunit beta</fullName>
    </alternativeName>
</protein>
<name>URE2_RHOPB</name>
<dbReference type="EC" id="3.5.1.5" evidence="1"/>
<dbReference type="EMBL" id="CP000301">
    <property type="protein sequence ID" value="ABD89230.1"/>
    <property type="molecule type" value="Genomic_DNA"/>
</dbReference>
<dbReference type="SMR" id="Q210F6"/>
<dbReference type="STRING" id="316056.RPC_3695"/>
<dbReference type="KEGG" id="rpc:RPC_3695"/>
<dbReference type="eggNOG" id="COG0832">
    <property type="taxonomic scope" value="Bacteria"/>
</dbReference>
<dbReference type="HOGENOM" id="CLU_129707_1_1_5"/>
<dbReference type="OrthoDB" id="9797217at2"/>
<dbReference type="UniPathway" id="UPA00258">
    <property type="reaction ID" value="UER00370"/>
</dbReference>
<dbReference type="GO" id="GO:0035550">
    <property type="term" value="C:urease complex"/>
    <property type="evidence" value="ECO:0007669"/>
    <property type="project" value="InterPro"/>
</dbReference>
<dbReference type="GO" id="GO:0009039">
    <property type="term" value="F:urease activity"/>
    <property type="evidence" value="ECO:0007669"/>
    <property type="project" value="UniProtKB-UniRule"/>
</dbReference>
<dbReference type="GO" id="GO:0043419">
    <property type="term" value="P:urea catabolic process"/>
    <property type="evidence" value="ECO:0007669"/>
    <property type="project" value="UniProtKB-UniRule"/>
</dbReference>
<dbReference type="CDD" id="cd00407">
    <property type="entry name" value="Urease_beta"/>
    <property type="match status" value="1"/>
</dbReference>
<dbReference type="FunFam" id="2.10.150.10:FF:000001">
    <property type="entry name" value="Urease subunit beta"/>
    <property type="match status" value="1"/>
</dbReference>
<dbReference type="Gene3D" id="2.10.150.10">
    <property type="entry name" value="Urease, beta subunit"/>
    <property type="match status" value="1"/>
</dbReference>
<dbReference type="HAMAP" id="MF_01954">
    <property type="entry name" value="Urease_beta"/>
    <property type="match status" value="1"/>
</dbReference>
<dbReference type="InterPro" id="IPR002019">
    <property type="entry name" value="Urease_beta-like"/>
</dbReference>
<dbReference type="InterPro" id="IPR036461">
    <property type="entry name" value="Urease_betasu_sf"/>
</dbReference>
<dbReference type="InterPro" id="IPR050069">
    <property type="entry name" value="Urease_subunit"/>
</dbReference>
<dbReference type="NCBIfam" id="NF009682">
    <property type="entry name" value="PRK13203.1"/>
    <property type="match status" value="1"/>
</dbReference>
<dbReference type="NCBIfam" id="TIGR00192">
    <property type="entry name" value="urease_beta"/>
    <property type="match status" value="1"/>
</dbReference>
<dbReference type="PANTHER" id="PTHR33569">
    <property type="entry name" value="UREASE"/>
    <property type="match status" value="1"/>
</dbReference>
<dbReference type="PANTHER" id="PTHR33569:SF1">
    <property type="entry name" value="UREASE"/>
    <property type="match status" value="1"/>
</dbReference>
<dbReference type="Pfam" id="PF00699">
    <property type="entry name" value="Urease_beta"/>
    <property type="match status" value="1"/>
</dbReference>
<dbReference type="SUPFAM" id="SSF51278">
    <property type="entry name" value="Urease, beta-subunit"/>
    <property type="match status" value="1"/>
</dbReference>
<feature type="chain" id="PRO_0000239898" description="Urease subunit beta">
    <location>
        <begin position="1"/>
        <end position="104"/>
    </location>
</feature>
<reference key="1">
    <citation type="submission" date="2006-03" db="EMBL/GenBank/DDBJ databases">
        <title>Complete sequence of Rhodopseudomonas palustris BisB18.</title>
        <authorList>
            <consortium name="US DOE Joint Genome Institute"/>
            <person name="Copeland A."/>
            <person name="Lucas S."/>
            <person name="Lapidus A."/>
            <person name="Barry K."/>
            <person name="Detter J.C."/>
            <person name="Glavina del Rio T."/>
            <person name="Hammon N."/>
            <person name="Israni S."/>
            <person name="Dalin E."/>
            <person name="Tice H."/>
            <person name="Pitluck S."/>
            <person name="Chain P."/>
            <person name="Malfatti S."/>
            <person name="Shin M."/>
            <person name="Vergez L."/>
            <person name="Schmutz J."/>
            <person name="Larimer F."/>
            <person name="Land M."/>
            <person name="Hauser L."/>
            <person name="Pelletier D.A."/>
            <person name="Kyrpides N."/>
            <person name="Anderson I."/>
            <person name="Oda Y."/>
            <person name="Harwood C.S."/>
            <person name="Richardson P."/>
        </authorList>
    </citation>
    <scope>NUCLEOTIDE SEQUENCE [LARGE SCALE GENOMIC DNA]</scope>
    <source>
        <strain>BisB18</strain>
    </source>
</reference>
<accession>Q210F6</accession>
<gene>
    <name evidence="1" type="primary">ureB</name>
    <name type="ordered locus">RPC_3695</name>
</gene>